<name>RLMH_CLOBH</name>
<accession>A5I7U4</accession>
<accession>A7G926</accession>
<feature type="chain" id="PRO_1000061774" description="Ribosomal RNA large subunit methyltransferase H">
    <location>
        <begin position="1"/>
        <end position="159"/>
    </location>
</feature>
<feature type="binding site" evidence="1">
    <location>
        <position position="76"/>
    </location>
    <ligand>
        <name>S-adenosyl-L-methionine</name>
        <dbReference type="ChEBI" id="CHEBI:59789"/>
    </ligand>
</feature>
<feature type="binding site" evidence="1">
    <location>
        <position position="108"/>
    </location>
    <ligand>
        <name>S-adenosyl-L-methionine</name>
        <dbReference type="ChEBI" id="CHEBI:59789"/>
    </ligand>
</feature>
<feature type="binding site" evidence="1">
    <location>
        <begin position="127"/>
        <end position="132"/>
    </location>
    <ligand>
        <name>S-adenosyl-L-methionine</name>
        <dbReference type="ChEBI" id="CHEBI:59789"/>
    </ligand>
</feature>
<organism>
    <name type="scientific">Clostridium botulinum (strain Hall / ATCC 3502 / NCTC 13319 / Type A)</name>
    <dbReference type="NCBI Taxonomy" id="441771"/>
    <lineage>
        <taxon>Bacteria</taxon>
        <taxon>Bacillati</taxon>
        <taxon>Bacillota</taxon>
        <taxon>Clostridia</taxon>
        <taxon>Eubacteriales</taxon>
        <taxon>Clostridiaceae</taxon>
        <taxon>Clostridium</taxon>
    </lineage>
</organism>
<protein>
    <recommendedName>
        <fullName evidence="1">Ribosomal RNA large subunit methyltransferase H</fullName>
        <ecNumber evidence="1">2.1.1.177</ecNumber>
    </recommendedName>
    <alternativeName>
        <fullName evidence="1">23S rRNA (pseudouridine1915-N3)-methyltransferase</fullName>
    </alternativeName>
    <alternativeName>
        <fullName evidence="1">23S rRNA m3Psi1915 methyltransferase</fullName>
    </alternativeName>
    <alternativeName>
        <fullName evidence="1">rRNA (pseudouridine-N3-)-methyltransferase RlmH</fullName>
    </alternativeName>
</protein>
<proteinExistence type="inferred from homology"/>
<sequence length="159" mass="18160">MNISIISVGKIKEKFLKAAIDEYSKRLSKYCKLNIIEVADEKTPDNASLKEENIIKEKEGNLILKHIKDNSFVIALDLKGKSITSEEFSDLIENCRLTGNSTIAFVIGGSLGLSQQVLSRANYKLSFSKMTFPHQLFRVMLLEQVYRAFRILCREPYHK</sequence>
<gene>
    <name evidence="1" type="primary">rlmH</name>
    <name type="ordered locus">CBO3570</name>
    <name type="ordered locus">CLC_3549</name>
</gene>
<keyword id="KW-0963">Cytoplasm</keyword>
<keyword id="KW-0489">Methyltransferase</keyword>
<keyword id="KW-1185">Reference proteome</keyword>
<keyword id="KW-0698">rRNA processing</keyword>
<keyword id="KW-0949">S-adenosyl-L-methionine</keyword>
<keyword id="KW-0808">Transferase</keyword>
<comment type="function">
    <text evidence="1">Specifically methylates the pseudouridine at position 1915 (m3Psi1915) in 23S rRNA.</text>
</comment>
<comment type="catalytic activity">
    <reaction evidence="1">
        <text>pseudouridine(1915) in 23S rRNA + S-adenosyl-L-methionine = N(3)-methylpseudouridine(1915) in 23S rRNA + S-adenosyl-L-homocysteine + H(+)</text>
        <dbReference type="Rhea" id="RHEA:42752"/>
        <dbReference type="Rhea" id="RHEA-COMP:10221"/>
        <dbReference type="Rhea" id="RHEA-COMP:10222"/>
        <dbReference type="ChEBI" id="CHEBI:15378"/>
        <dbReference type="ChEBI" id="CHEBI:57856"/>
        <dbReference type="ChEBI" id="CHEBI:59789"/>
        <dbReference type="ChEBI" id="CHEBI:65314"/>
        <dbReference type="ChEBI" id="CHEBI:74486"/>
        <dbReference type="EC" id="2.1.1.177"/>
    </reaction>
</comment>
<comment type="subunit">
    <text evidence="1">Homodimer.</text>
</comment>
<comment type="subcellular location">
    <subcellularLocation>
        <location evidence="1">Cytoplasm</location>
    </subcellularLocation>
</comment>
<comment type="similarity">
    <text evidence="1">Belongs to the RNA methyltransferase RlmH family.</text>
</comment>
<evidence type="ECO:0000255" key="1">
    <source>
        <dbReference type="HAMAP-Rule" id="MF_00658"/>
    </source>
</evidence>
<reference key="1">
    <citation type="journal article" date="2007" name="Genome Res.">
        <title>Genome sequence of a proteolytic (Group I) Clostridium botulinum strain Hall A and comparative analysis of the clostridial genomes.</title>
        <authorList>
            <person name="Sebaihia M."/>
            <person name="Peck M.W."/>
            <person name="Minton N.P."/>
            <person name="Thomson N.R."/>
            <person name="Holden M.T.G."/>
            <person name="Mitchell W.J."/>
            <person name="Carter A.T."/>
            <person name="Bentley S.D."/>
            <person name="Mason D.R."/>
            <person name="Crossman L."/>
            <person name="Paul C.J."/>
            <person name="Ivens A."/>
            <person name="Wells-Bennik M.H.J."/>
            <person name="Davis I.J."/>
            <person name="Cerdeno-Tarraga A.M."/>
            <person name="Churcher C."/>
            <person name="Quail M.A."/>
            <person name="Chillingworth T."/>
            <person name="Feltwell T."/>
            <person name="Fraser A."/>
            <person name="Goodhead I."/>
            <person name="Hance Z."/>
            <person name="Jagels K."/>
            <person name="Larke N."/>
            <person name="Maddison M."/>
            <person name="Moule S."/>
            <person name="Mungall K."/>
            <person name="Norbertczak H."/>
            <person name="Rabbinowitsch E."/>
            <person name="Sanders M."/>
            <person name="Simmonds M."/>
            <person name="White B."/>
            <person name="Whithead S."/>
            <person name="Parkhill J."/>
        </authorList>
    </citation>
    <scope>NUCLEOTIDE SEQUENCE [LARGE SCALE GENOMIC DNA]</scope>
    <source>
        <strain>Hall / ATCC 3502 / NCTC 13319 / Type A</strain>
    </source>
</reference>
<reference key="2">
    <citation type="journal article" date="2007" name="PLoS ONE">
        <title>Analysis of the neurotoxin complex genes in Clostridium botulinum A1-A4 and B1 strains: BoNT/A3, /Ba4 and /B1 clusters are located within plasmids.</title>
        <authorList>
            <person name="Smith T.J."/>
            <person name="Hill K.K."/>
            <person name="Foley B.T."/>
            <person name="Detter J.C."/>
            <person name="Munk A.C."/>
            <person name="Bruce D.C."/>
            <person name="Doggett N.A."/>
            <person name="Smith L.A."/>
            <person name="Marks J.D."/>
            <person name="Xie G."/>
            <person name="Brettin T.S."/>
        </authorList>
    </citation>
    <scope>NUCLEOTIDE SEQUENCE [LARGE SCALE GENOMIC DNA]</scope>
    <source>
        <strain>Hall / ATCC 3502 / NCTC 13319 / Type A</strain>
    </source>
</reference>
<dbReference type="EC" id="2.1.1.177" evidence="1"/>
<dbReference type="EMBL" id="CP000727">
    <property type="protein sequence ID" value="ABS37851.1"/>
    <property type="molecule type" value="Genomic_DNA"/>
</dbReference>
<dbReference type="EMBL" id="AM412317">
    <property type="protein sequence ID" value="CAL85129.1"/>
    <property type="molecule type" value="Genomic_DNA"/>
</dbReference>
<dbReference type="RefSeq" id="WP_012048404.1">
    <property type="nucleotide sequence ID" value="NC_009698.1"/>
</dbReference>
<dbReference type="RefSeq" id="YP_001256050.1">
    <property type="nucleotide sequence ID" value="NC_009495.1"/>
</dbReference>
<dbReference type="RefSeq" id="YP_001389291.1">
    <property type="nucleotide sequence ID" value="NC_009698.1"/>
</dbReference>
<dbReference type="SMR" id="A5I7U4"/>
<dbReference type="GeneID" id="5186910"/>
<dbReference type="KEGG" id="cbh:CLC_3549"/>
<dbReference type="KEGG" id="cbo:CBO3570"/>
<dbReference type="PATRIC" id="fig|413999.7.peg.3546"/>
<dbReference type="HOGENOM" id="CLU_100552_0_0_9"/>
<dbReference type="PRO" id="PR:A5I7U4"/>
<dbReference type="Proteomes" id="UP000001986">
    <property type="component" value="Chromosome"/>
</dbReference>
<dbReference type="GO" id="GO:0005737">
    <property type="term" value="C:cytoplasm"/>
    <property type="evidence" value="ECO:0007669"/>
    <property type="project" value="UniProtKB-SubCell"/>
</dbReference>
<dbReference type="GO" id="GO:0070038">
    <property type="term" value="F:rRNA (pseudouridine-N3-)-methyltransferase activity"/>
    <property type="evidence" value="ECO:0007669"/>
    <property type="project" value="UniProtKB-UniRule"/>
</dbReference>
<dbReference type="CDD" id="cd18081">
    <property type="entry name" value="RlmH-like"/>
    <property type="match status" value="1"/>
</dbReference>
<dbReference type="Gene3D" id="3.40.1280.10">
    <property type="match status" value="1"/>
</dbReference>
<dbReference type="HAMAP" id="MF_00658">
    <property type="entry name" value="23SrRNA_methyltr_H"/>
    <property type="match status" value="1"/>
</dbReference>
<dbReference type="InterPro" id="IPR029028">
    <property type="entry name" value="Alpha/beta_knot_MTases"/>
</dbReference>
<dbReference type="InterPro" id="IPR003742">
    <property type="entry name" value="RlmH-like"/>
</dbReference>
<dbReference type="InterPro" id="IPR029026">
    <property type="entry name" value="tRNA_m1G_MTases_N"/>
</dbReference>
<dbReference type="NCBIfam" id="NF000985">
    <property type="entry name" value="PRK00103.1-3"/>
    <property type="match status" value="1"/>
</dbReference>
<dbReference type="NCBIfam" id="TIGR00246">
    <property type="entry name" value="tRNA_RlmH_YbeA"/>
    <property type="match status" value="1"/>
</dbReference>
<dbReference type="PANTHER" id="PTHR33603">
    <property type="entry name" value="METHYLTRANSFERASE"/>
    <property type="match status" value="1"/>
</dbReference>
<dbReference type="PANTHER" id="PTHR33603:SF1">
    <property type="entry name" value="RIBOSOMAL RNA LARGE SUBUNIT METHYLTRANSFERASE H"/>
    <property type="match status" value="1"/>
</dbReference>
<dbReference type="Pfam" id="PF02590">
    <property type="entry name" value="SPOUT_MTase"/>
    <property type="match status" value="1"/>
</dbReference>
<dbReference type="PIRSF" id="PIRSF004505">
    <property type="entry name" value="MT_bac"/>
    <property type="match status" value="1"/>
</dbReference>
<dbReference type="SUPFAM" id="SSF75217">
    <property type="entry name" value="alpha/beta knot"/>
    <property type="match status" value="1"/>
</dbReference>